<feature type="chain" id="PRO_0000424413" description="Structural maintenance of chromosomes protein 6B">
    <location>
        <begin position="1"/>
        <end position="1057"/>
    </location>
</feature>
<feature type="domain" description="Zinc-hook">
    <location>
        <begin position="22"/>
        <end position="1047"/>
    </location>
</feature>
<feature type="region of interest" description="Flexible hinge">
    <location>
        <begin position="449"/>
        <end position="632"/>
    </location>
</feature>
<feature type="region of interest" description="Disordered" evidence="3">
    <location>
        <begin position="818"/>
        <end position="845"/>
    </location>
</feature>
<feature type="coiled-coil region" evidence="2">
    <location>
        <begin position="135"/>
        <end position="448"/>
    </location>
</feature>
<feature type="coiled-coil region" evidence="2">
    <location>
        <begin position="633"/>
        <end position="904"/>
    </location>
</feature>
<feature type="compositionally biased region" description="Basic and acidic residues" evidence="3">
    <location>
        <begin position="818"/>
        <end position="828"/>
    </location>
</feature>
<feature type="binding site" evidence="2">
    <location>
        <begin position="49"/>
        <end position="56"/>
    </location>
    <ligand>
        <name>ATP</name>
        <dbReference type="ChEBI" id="CHEBI:30616"/>
    </ligand>
</feature>
<keyword id="KW-0067">ATP-binding</keyword>
<keyword id="KW-0158">Chromosome</keyword>
<keyword id="KW-0175">Coiled coil</keyword>
<keyword id="KW-0227">DNA damage</keyword>
<keyword id="KW-0233">DNA recombination</keyword>
<keyword id="KW-0234">DNA repair</keyword>
<keyword id="KW-0547">Nucleotide-binding</keyword>
<keyword id="KW-0539">Nucleus</keyword>
<keyword id="KW-1185">Reference proteome</keyword>
<dbReference type="EMBL" id="AF120932">
    <property type="protein sequence ID" value="AAD54769.1"/>
    <property type="status" value="ALT_SEQ"/>
    <property type="molecule type" value="Genomic_DNA"/>
</dbReference>
<dbReference type="EMBL" id="AF120933">
    <property type="protein sequence ID" value="AAD54770.1"/>
    <property type="status" value="ALT_SEQ"/>
    <property type="molecule type" value="mRNA"/>
</dbReference>
<dbReference type="EMBL" id="AB016887">
    <property type="protein sequence ID" value="BAB10445.1"/>
    <property type="molecule type" value="Genomic_DNA"/>
</dbReference>
<dbReference type="EMBL" id="CP002688">
    <property type="protein sequence ID" value="AED97471.1"/>
    <property type="molecule type" value="Genomic_DNA"/>
</dbReference>
<dbReference type="RefSeq" id="NP_200954.1">
    <property type="nucleotide sequence ID" value="NM_125539.2"/>
</dbReference>
<dbReference type="SMR" id="Q9FII7"/>
<dbReference type="FunCoup" id="Q9FII7">
    <property type="interactions" value="3572"/>
</dbReference>
<dbReference type="STRING" id="3702.Q9FII7"/>
<dbReference type="iPTMnet" id="Q9FII7"/>
<dbReference type="PaxDb" id="3702-AT5G61460.1"/>
<dbReference type="ProteomicsDB" id="232564"/>
<dbReference type="EnsemblPlants" id="AT5G61460.1">
    <property type="protein sequence ID" value="AT5G61460.1"/>
    <property type="gene ID" value="AT5G61460"/>
</dbReference>
<dbReference type="GeneID" id="836267"/>
<dbReference type="Gramene" id="AT5G61460.1">
    <property type="protein sequence ID" value="AT5G61460.1"/>
    <property type="gene ID" value="AT5G61460"/>
</dbReference>
<dbReference type="KEGG" id="ath:AT5G61460"/>
<dbReference type="Araport" id="AT5G61460"/>
<dbReference type="TAIR" id="AT5G61460">
    <property type="gene designation" value="MIM"/>
</dbReference>
<dbReference type="eggNOG" id="KOG0250">
    <property type="taxonomic scope" value="Eukaryota"/>
</dbReference>
<dbReference type="HOGENOM" id="CLU_009063_1_0_1"/>
<dbReference type="InParanoid" id="Q9FII7"/>
<dbReference type="OMA" id="MCHDHFY"/>
<dbReference type="PhylomeDB" id="Q9FII7"/>
<dbReference type="CD-CODE" id="4299E36E">
    <property type="entry name" value="Nucleolus"/>
</dbReference>
<dbReference type="PRO" id="PR:Q9FII7"/>
<dbReference type="Proteomes" id="UP000006548">
    <property type="component" value="Chromosome 5"/>
</dbReference>
<dbReference type="ExpressionAtlas" id="Q9FII7">
    <property type="expression patterns" value="baseline and differential"/>
</dbReference>
<dbReference type="GO" id="GO:0005694">
    <property type="term" value="C:chromosome"/>
    <property type="evidence" value="ECO:0007669"/>
    <property type="project" value="UniProtKB-SubCell"/>
</dbReference>
<dbReference type="GO" id="GO:0005634">
    <property type="term" value="C:nucleus"/>
    <property type="evidence" value="ECO:0007669"/>
    <property type="project" value="UniProtKB-SubCell"/>
</dbReference>
<dbReference type="GO" id="GO:0005524">
    <property type="term" value="F:ATP binding"/>
    <property type="evidence" value="ECO:0007669"/>
    <property type="project" value="UniProtKB-KW"/>
</dbReference>
<dbReference type="GO" id="GO:0016887">
    <property type="term" value="F:ATP hydrolysis activity"/>
    <property type="evidence" value="ECO:0007669"/>
    <property type="project" value="InterPro"/>
</dbReference>
<dbReference type="GO" id="GO:0006302">
    <property type="term" value="P:double-strand break repair"/>
    <property type="evidence" value="ECO:0000315"/>
    <property type="project" value="TAIR"/>
</dbReference>
<dbReference type="GO" id="GO:0000724">
    <property type="term" value="P:double-strand break repair via homologous recombination"/>
    <property type="evidence" value="ECO:0000315"/>
    <property type="project" value="TAIR"/>
</dbReference>
<dbReference type="GO" id="GO:0010165">
    <property type="term" value="P:response to X-ray"/>
    <property type="evidence" value="ECO:0000315"/>
    <property type="project" value="TAIR"/>
</dbReference>
<dbReference type="GO" id="GO:0007062">
    <property type="term" value="P:sister chromatid cohesion"/>
    <property type="evidence" value="ECO:0000315"/>
    <property type="project" value="TAIR"/>
</dbReference>
<dbReference type="FunFam" id="3.40.50.300:FF:003772">
    <property type="entry name" value="Structural maintenance of chromosomes protein 6A"/>
    <property type="match status" value="1"/>
</dbReference>
<dbReference type="Gene3D" id="3.40.50.300">
    <property type="entry name" value="P-loop containing nucleotide triphosphate hydrolases"/>
    <property type="match status" value="2"/>
</dbReference>
<dbReference type="InterPro" id="IPR027417">
    <property type="entry name" value="P-loop_NTPase"/>
</dbReference>
<dbReference type="InterPro" id="IPR038729">
    <property type="entry name" value="Rad50/SbcC_AAA"/>
</dbReference>
<dbReference type="InterPro" id="IPR036277">
    <property type="entry name" value="SMC_hinge_sf"/>
</dbReference>
<dbReference type="PANTHER" id="PTHR19306">
    <property type="entry name" value="STRUCTURAL MAINTENANCE OF CHROMOSOMES 5,6 SMC5, SMC6"/>
    <property type="match status" value="1"/>
</dbReference>
<dbReference type="PANTHER" id="PTHR19306:SF9">
    <property type="entry name" value="STRUCTURAL MAINTENANCE OF CHROMOSOMES PROTEIN 6B"/>
    <property type="match status" value="1"/>
</dbReference>
<dbReference type="Pfam" id="PF13476">
    <property type="entry name" value="AAA_23"/>
    <property type="match status" value="1"/>
</dbReference>
<dbReference type="SUPFAM" id="SSF52540">
    <property type="entry name" value="P-loop containing nucleoside triphosphate hydrolases"/>
    <property type="match status" value="1"/>
</dbReference>
<dbReference type="SUPFAM" id="SSF75553">
    <property type="entry name" value="Smc hinge domain"/>
    <property type="match status" value="1"/>
</dbReference>
<sequence>MVKSGARASDSFIKQRSGSGSILRIKVENFMCHSNLQIEFGEWVNFITGQNGSGKSAILTALCVAFGCRARGTQRAATLKDFIKTGCSYAVVQVEMKNSGEDAFKPEIYGGVIIIERRITESATATVLKDYLGKKVSNKRDELRELVEHFNIDVENPCVVMSQDKSREFLHSGNDKDKFKFFFKATLLQQVNDLLQSIYEHLTKATAIVDELENTIKPIEKEISELRGKIKNMEQVEEIAQRLQQLKKKLAWSWVYDVDRQLQEQTEKIVKLKERIPTCQAKIDWELGKVESLRDTLTKKKAQVACLMDESTAMKREIESFHQSAKTAVREKIALQEEFNHKCNYVQKIKDRVRRLERQVGDINEQTMKNTQAEQSEIEEKLKYLEQEVEKVETLRSRLKEEENCFLEKAFEGRKKMEHIEDMIKNHQKRQRFITSNINDLKKHQTNKVTAFGGDRVINLLQAIERNHRRFRKPPIGPIGSHVTLVNGNKWASSVEQALGTLLNAFIVTDHKDSLTLRGCANEANYRNLKIIIYDFSRPRLNIPRHMVPQTEHPTIFSVIDSDNPTVLNVLVDQSGVERQVLAENYEEGKAVAFGKRLSNLKEVYTLDGYKMFFRGPVQTTLPPLSRRPSRLCASFDDQIKDLEIEASKEQNEINQCMRRKREAEENLEELELKVRQLKKHRSQAEKVLTTKELEMHDLKNTVAAEIEALPSSSVNELQREIMKDLEEIDEKEAFLEKLQNCLKEAELKANKLTALFENMRESAKGEIDAFEEAENELKKIEKDLQSAEAEKIHYENIMKNKVLPDIKNAEANYEELKNKRKESDQKASEICPESEIESLGPWDGSTPEQLSAQITRMNQRLHRENQQFSESIDDLRMMYESLERKIAKKRKSYQDHREKLMACKNALDSRWAKFQRNASLLRRQLTWQFNAHLGKKGISGHIKVSYENKTLSIEVKMPQDATSNVVRDTKGLSGGERSFSTLCFALALHEMTEAPFRAMDEFDVFMDAVSRKISLDALVDFAIGEGSQWMFITPHDISMVKSHERIKKQQMAAPRS</sequence>
<proteinExistence type="evidence at transcript level"/>
<comment type="function">
    <text evidence="4 5 6 7">Core component of the SMC5-SMC6 complex that promotes sister chromatid alignment after DNA damage and facilitates double-stranded DNA breaks (DSBs) repair via homologous recombination between sister chromatids.</text>
</comment>
<comment type="subunit">
    <text evidence="1">Forms a heterodimer with SMC5. The SMC5-SMC6 complex is composed of the SMC5 and SMC6 heterodimer attached via their hinge domain and from the non-SMC subunit NSE4A or NSE4B (By similarity).</text>
</comment>
<comment type="subcellular location">
    <subcellularLocation>
        <location evidence="1">Nucleus</location>
    </subcellularLocation>
    <subcellularLocation>
        <location evidence="1">Chromosome</location>
    </subcellularLocation>
    <text evidence="1">Associates with chromatin.</text>
</comment>
<comment type="tissue specificity">
    <text evidence="4 7">Expressed in seedlings, rosette leaves and floral buds.</text>
</comment>
<comment type="induction">
    <text evidence="4">By methyl methanesulfonate (MMS) treatment.</text>
</comment>
<comment type="domain">
    <text evidence="1">The flexible hinge domain, which separates the large intramolecular coiled coil regions, allows the heterotypic interaction with the corresponding domain of SMC6, forming a V-shaped heterodimer.</text>
</comment>
<comment type="disruption phenotype">
    <text evidence="4 7">Delayed root growth in seedlings. Hypersensitivity to genotoxic stress such as UV-C, X-rays, methyl methanesulfonate (MMS) and mitomycin C (MMC).</text>
</comment>
<comment type="similarity">
    <text evidence="8">Belongs to the SMC family. SMC6 subfamily.</text>
</comment>
<comment type="sequence caution" evidence="8">
    <conflict type="miscellaneous discrepancy">
        <sequence resource="EMBL-CDS" id="AAD54769"/>
    </conflict>
    <text>Sequencing errors.</text>
</comment>
<comment type="sequence caution" evidence="8">
    <conflict type="miscellaneous discrepancy">
        <sequence resource="EMBL-CDS" id="AAD54770"/>
    </conflict>
    <text>Sequencing errors.</text>
</comment>
<reference key="1">
    <citation type="journal article" date="1999" name="EMBO J.">
        <title>An SMC-like protein is required for efficient homologous recombination in Arabidopsis.</title>
        <authorList>
            <person name="Mengiste T."/>
            <person name="Revenkova E."/>
            <person name="Bechtold N."/>
            <person name="Paszkowski J."/>
        </authorList>
    </citation>
    <scope>NUCLEOTIDE SEQUENCE [GENOMIC DNA / MRNA]</scope>
    <scope>FUNCTION</scope>
    <scope>TISSUE SPECIFICITY</scope>
    <scope>INDUCTION BY MMS</scope>
    <scope>DISRUPTION PHENOTYPE</scope>
    <source>
        <strain>cv. Columbia</strain>
    </source>
</reference>
<reference key="2">
    <citation type="journal article" date="1998" name="DNA Res.">
        <title>Structural analysis of Arabidopsis thaliana chromosome 5. VIII. Sequence features of the regions of 1,081,958 bp covered by seventeen physically assigned P1 and TAC clones.</title>
        <authorList>
            <person name="Asamizu E."/>
            <person name="Sato S."/>
            <person name="Kaneko T."/>
            <person name="Nakamura Y."/>
            <person name="Kotani H."/>
            <person name="Miyajima N."/>
            <person name="Tabata S."/>
        </authorList>
    </citation>
    <scope>NUCLEOTIDE SEQUENCE [LARGE SCALE GENOMIC DNA]</scope>
    <source>
        <strain>cv. Columbia</strain>
    </source>
</reference>
<reference key="3">
    <citation type="journal article" date="2017" name="Plant J.">
        <title>Araport11: a complete reannotation of the Arabidopsis thaliana reference genome.</title>
        <authorList>
            <person name="Cheng C.Y."/>
            <person name="Krishnakumar V."/>
            <person name="Chan A.P."/>
            <person name="Thibaud-Nissen F."/>
            <person name="Schobel S."/>
            <person name="Town C.D."/>
        </authorList>
    </citation>
    <scope>GENOME REANNOTATION</scope>
    <source>
        <strain>cv. Columbia</strain>
    </source>
</reference>
<reference key="4">
    <citation type="journal article" date="2000" name="Plant J.">
        <title>Elevated levels of intrachromosomal homologous recombination in Arabidopsis overexpressing the MIM gene.</title>
        <authorList>
            <person name="Hanin M."/>
            <person name="Mengiste T."/>
            <person name="Bogucki A."/>
            <person name="Paszkowski J."/>
        </authorList>
    </citation>
    <scope>FUNCTION</scope>
</reference>
<reference key="5">
    <citation type="journal article" date="2009" name="DNA Repair">
        <title>Rapid repair of DNA double strand breaks in Arabidopsis thaliana is dependent on proteins involved in chromosome structure maintenance.</title>
        <authorList>
            <person name="Kozak J."/>
            <person name="West C.E."/>
            <person name="White C."/>
            <person name="da Costa-Nunes J.A."/>
            <person name="Angelis K.J."/>
        </authorList>
    </citation>
    <scope>FUNCTION</scope>
</reference>
<reference key="6">
    <citation type="journal article" date="2009" name="Plant Cell">
        <title>The STRUCTURAL MAINTENANCE OF CHROMOSOMES 5/6 complex promotes sister chromatid alignment and homologous recombination after DNA damage in Arabidopsis thaliana.</title>
        <authorList>
            <person name="Watanabe K."/>
            <person name="Pacher M."/>
            <person name="Dukowic S."/>
            <person name="Schubert V."/>
            <person name="Puchta H."/>
            <person name="Schubert I."/>
        </authorList>
    </citation>
    <scope>FUNCTION</scope>
    <scope>TISSUE SPECIFICITY</scope>
    <scope>DISRUPTION PHENOTYPE</scope>
</reference>
<evidence type="ECO:0000250" key="1"/>
<evidence type="ECO:0000255" key="2"/>
<evidence type="ECO:0000256" key="3">
    <source>
        <dbReference type="SAM" id="MobiDB-lite"/>
    </source>
</evidence>
<evidence type="ECO:0000269" key="4">
    <source>
    </source>
</evidence>
<evidence type="ECO:0000269" key="5">
    <source>
    </source>
</evidence>
<evidence type="ECO:0000269" key="6">
    <source>
    </source>
</evidence>
<evidence type="ECO:0000269" key="7">
    <source>
    </source>
</evidence>
<evidence type="ECO:0000305" key="8"/>
<name>SMC6B_ARATH</name>
<accession>Q9FII7</accession>
<accession>Q9S722</accession>
<organism>
    <name type="scientific">Arabidopsis thaliana</name>
    <name type="common">Mouse-ear cress</name>
    <dbReference type="NCBI Taxonomy" id="3702"/>
    <lineage>
        <taxon>Eukaryota</taxon>
        <taxon>Viridiplantae</taxon>
        <taxon>Streptophyta</taxon>
        <taxon>Embryophyta</taxon>
        <taxon>Tracheophyta</taxon>
        <taxon>Spermatophyta</taxon>
        <taxon>Magnoliopsida</taxon>
        <taxon>eudicotyledons</taxon>
        <taxon>Gunneridae</taxon>
        <taxon>Pentapetalae</taxon>
        <taxon>rosids</taxon>
        <taxon>malvids</taxon>
        <taxon>Brassicales</taxon>
        <taxon>Brassicaceae</taxon>
        <taxon>Camelineae</taxon>
        <taxon>Arabidopsis</taxon>
    </lineage>
</organism>
<gene>
    <name type="primary">SMC6B</name>
    <name type="synonym">MIM</name>
    <name type="ordered locus">At5g61460</name>
    <name type="ORF">MCI2.2</name>
</gene>
<protein>
    <recommendedName>
        <fullName>Structural maintenance of chromosomes protein 6B</fullName>
    </recommendedName>
    <alternativeName>
        <fullName>DNA repair protein RAD18</fullName>
        <shortName>AtRAD18</shortName>
    </alternativeName>
</protein>